<name>PSRP_SHEB9</name>
<organism>
    <name type="scientific">Shewanella baltica (strain OS195)</name>
    <dbReference type="NCBI Taxonomy" id="399599"/>
    <lineage>
        <taxon>Bacteria</taxon>
        <taxon>Pseudomonadati</taxon>
        <taxon>Pseudomonadota</taxon>
        <taxon>Gammaproteobacteria</taxon>
        <taxon>Alteromonadales</taxon>
        <taxon>Shewanellaceae</taxon>
        <taxon>Shewanella</taxon>
    </lineage>
</organism>
<dbReference type="EC" id="2.7.11.33" evidence="1"/>
<dbReference type="EC" id="2.7.4.28" evidence="1"/>
<dbReference type="EMBL" id="CP000891">
    <property type="protein sequence ID" value="ABX49770.1"/>
    <property type="molecule type" value="Genomic_DNA"/>
</dbReference>
<dbReference type="RefSeq" id="WP_006081952.1">
    <property type="nucleotide sequence ID" value="NC_009997.1"/>
</dbReference>
<dbReference type="SMR" id="A9L4I0"/>
<dbReference type="KEGG" id="sbn:Sbal195_2602"/>
<dbReference type="HOGENOM" id="CLU_046206_1_0_6"/>
<dbReference type="Proteomes" id="UP000000770">
    <property type="component" value="Chromosome"/>
</dbReference>
<dbReference type="GO" id="GO:0043531">
    <property type="term" value="F:ADP binding"/>
    <property type="evidence" value="ECO:0007669"/>
    <property type="project" value="UniProtKB-UniRule"/>
</dbReference>
<dbReference type="GO" id="GO:0005524">
    <property type="term" value="F:ATP binding"/>
    <property type="evidence" value="ECO:0007669"/>
    <property type="project" value="InterPro"/>
</dbReference>
<dbReference type="GO" id="GO:0016776">
    <property type="term" value="F:phosphotransferase activity, phosphate group as acceptor"/>
    <property type="evidence" value="ECO:0007669"/>
    <property type="project" value="UniProtKB-UniRule"/>
</dbReference>
<dbReference type="GO" id="GO:0004674">
    <property type="term" value="F:protein serine/threonine kinase activity"/>
    <property type="evidence" value="ECO:0007669"/>
    <property type="project" value="UniProtKB-UniRule"/>
</dbReference>
<dbReference type="HAMAP" id="MF_01062">
    <property type="entry name" value="PSRP"/>
    <property type="match status" value="1"/>
</dbReference>
<dbReference type="InterPro" id="IPR005177">
    <property type="entry name" value="Kinase-pyrophosphorylase"/>
</dbReference>
<dbReference type="InterPro" id="IPR026530">
    <property type="entry name" value="PSRP"/>
</dbReference>
<dbReference type="NCBIfam" id="NF003742">
    <property type="entry name" value="PRK05339.1"/>
    <property type="match status" value="1"/>
</dbReference>
<dbReference type="PANTHER" id="PTHR31756">
    <property type="entry name" value="PYRUVATE, PHOSPHATE DIKINASE REGULATORY PROTEIN 1, CHLOROPLASTIC"/>
    <property type="match status" value="1"/>
</dbReference>
<dbReference type="PANTHER" id="PTHR31756:SF3">
    <property type="entry name" value="PYRUVATE, PHOSPHATE DIKINASE REGULATORY PROTEIN 1, CHLOROPLASTIC"/>
    <property type="match status" value="1"/>
</dbReference>
<dbReference type="Pfam" id="PF03618">
    <property type="entry name" value="Kinase-PPPase"/>
    <property type="match status" value="1"/>
</dbReference>
<proteinExistence type="inferred from homology"/>
<accession>A9L4I0</accession>
<sequence>MAPKVFYISDGTAITAEVFGHAVLSQFPLEFESLTIPFVETLTKAEQVKRQINDCFITTGERPLVFHSIVKAEIRDIIYSSEGLDYDFLNTFVAPLEQHLGVSASPVLHRTHGKANHGYEARIDAINFAMDNDDGQTMKHMDQADLVLLGVSRCGKTPSSLYLSMQFGIKAANYPFTEDDMDNLKLPDALKRNKKKLFGLTIDPVRLHEIRQSRMENSRYSSLKQCRLEVKEVEMLFKRERIPYIDTTNHSVEEIATKILDVTGLERHMF</sequence>
<protein>
    <recommendedName>
        <fullName evidence="1">Putative phosphoenolpyruvate synthase regulatory protein</fullName>
        <shortName evidence="1">PEP synthase regulatory protein</shortName>
        <shortName evidence="1">PSRP</shortName>
        <ecNumber evidence="1">2.7.11.33</ecNumber>
        <ecNumber evidence="1">2.7.4.28</ecNumber>
    </recommendedName>
    <alternativeName>
        <fullName evidence="1">Pyruvate, water dikinase regulatory protein</fullName>
    </alternativeName>
</protein>
<gene>
    <name type="ordered locus">Sbal195_2602</name>
</gene>
<reference key="1">
    <citation type="submission" date="2007-11" db="EMBL/GenBank/DDBJ databases">
        <title>Complete sequence of chromosome of Shewanella baltica OS195.</title>
        <authorList>
            <consortium name="US DOE Joint Genome Institute"/>
            <person name="Copeland A."/>
            <person name="Lucas S."/>
            <person name="Lapidus A."/>
            <person name="Barry K."/>
            <person name="Glavina del Rio T."/>
            <person name="Dalin E."/>
            <person name="Tice H."/>
            <person name="Pitluck S."/>
            <person name="Chain P."/>
            <person name="Malfatti S."/>
            <person name="Shin M."/>
            <person name="Vergez L."/>
            <person name="Schmutz J."/>
            <person name="Larimer F."/>
            <person name="Land M."/>
            <person name="Hauser L."/>
            <person name="Kyrpides N."/>
            <person name="Kim E."/>
            <person name="Brettar I."/>
            <person name="Rodrigues J."/>
            <person name="Konstantinidis K."/>
            <person name="Klappenbach J."/>
            <person name="Hofle M."/>
            <person name="Tiedje J."/>
            <person name="Richardson P."/>
        </authorList>
    </citation>
    <scope>NUCLEOTIDE SEQUENCE [LARGE SCALE GENOMIC DNA]</scope>
    <source>
        <strain>OS195</strain>
    </source>
</reference>
<keyword id="KW-0418">Kinase</keyword>
<keyword id="KW-0547">Nucleotide-binding</keyword>
<keyword id="KW-0723">Serine/threonine-protein kinase</keyword>
<keyword id="KW-0808">Transferase</keyword>
<feature type="chain" id="PRO_1000084472" description="Putative phosphoenolpyruvate synthase regulatory protein">
    <location>
        <begin position="1"/>
        <end position="270"/>
    </location>
</feature>
<feature type="binding site" evidence="1">
    <location>
        <begin position="150"/>
        <end position="157"/>
    </location>
    <ligand>
        <name>ADP</name>
        <dbReference type="ChEBI" id="CHEBI:456216"/>
    </ligand>
</feature>
<evidence type="ECO:0000255" key="1">
    <source>
        <dbReference type="HAMAP-Rule" id="MF_01062"/>
    </source>
</evidence>
<comment type="function">
    <text evidence="1">Bifunctional serine/threonine kinase and phosphorylase involved in the regulation of the phosphoenolpyruvate synthase (PEPS) by catalyzing its phosphorylation/dephosphorylation.</text>
</comment>
<comment type="catalytic activity">
    <reaction evidence="1">
        <text>[pyruvate, water dikinase] + ADP = [pyruvate, water dikinase]-phosphate + AMP + H(+)</text>
        <dbReference type="Rhea" id="RHEA:46020"/>
        <dbReference type="Rhea" id="RHEA-COMP:11425"/>
        <dbReference type="Rhea" id="RHEA-COMP:11426"/>
        <dbReference type="ChEBI" id="CHEBI:15378"/>
        <dbReference type="ChEBI" id="CHEBI:43176"/>
        <dbReference type="ChEBI" id="CHEBI:68546"/>
        <dbReference type="ChEBI" id="CHEBI:456215"/>
        <dbReference type="ChEBI" id="CHEBI:456216"/>
        <dbReference type="EC" id="2.7.11.33"/>
    </reaction>
</comment>
<comment type="catalytic activity">
    <reaction evidence="1">
        <text>[pyruvate, water dikinase]-phosphate + phosphate + H(+) = [pyruvate, water dikinase] + diphosphate</text>
        <dbReference type="Rhea" id="RHEA:48580"/>
        <dbReference type="Rhea" id="RHEA-COMP:11425"/>
        <dbReference type="Rhea" id="RHEA-COMP:11426"/>
        <dbReference type="ChEBI" id="CHEBI:15378"/>
        <dbReference type="ChEBI" id="CHEBI:33019"/>
        <dbReference type="ChEBI" id="CHEBI:43176"/>
        <dbReference type="ChEBI" id="CHEBI:43474"/>
        <dbReference type="ChEBI" id="CHEBI:68546"/>
        <dbReference type="EC" id="2.7.4.28"/>
    </reaction>
</comment>
<comment type="similarity">
    <text evidence="1">Belongs to the pyruvate, phosphate/water dikinase regulatory protein family. PSRP subfamily.</text>
</comment>